<feature type="chain" id="PRO_0000199273" description="Bilin biosynthesis protein PecE">
    <location>
        <begin position="1"/>
        <end position="253"/>
    </location>
</feature>
<keyword id="KW-0042">Antenna complex</keyword>
<keyword id="KW-0456">Lyase</keyword>
<keyword id="KW-0605">Phycobilisome</keyword>
<keyword id="KW-1185">Reference proteome</keyword>
<sequence length="253" mass="28176">MTAEPILSPETAIAALSGEDNQIRYYAAWWLGKHNVQAGFTALCVALFDERYRIPSGGYPLRRQAARALGLLKNPQAVPALIAALECDEDLRLREAVICSLAAIGDKRAVTPLLNLLQSSQAQPYEALIEALATLQVWSARPQIEPFLQHYSERVQCAAARYMYLLTQESEYIERIVKNLNHDNMYLRWAAVFDLGAVAHQQAVQAILTAQVPNSLKLLNLKRILEAMLNNNSVNHEKAALLFGAIDDLLIQL</sequence>
<protein>
    <recommendedName>
        <fullName>Bilin biosynthesis protein PecE</fullName>
    </recommendedName>
</protein>
<proteinExistence type="inferred from homology"/>
<reference key="1">
    <citation type="journal article" date="1992" name="J. Bacteriol.">
        <title>Genes encoding the phycobilisome rod substructure are clustered on the Anabaena chromosome: characterization of the phycoerythrocyanin operon.</title>
        <authorList>
            <person name="Swanson R.V."/>
            <person name="de Lorimier R."/>
            <person name="Glazer A.N."/>
        </authorList>
    </citation>
    <scope>NUCLEOTIDE SEQUENCE [GENOMIC DNA]</scope>
</reference>
<reference key="2">
    <citation type="journal article" date="2001" name="DNA Res.">
        <title>Complete genomic sequence of the filamentous nitrogen-fixing cyanobacterium Anabaena sp. strain PCC 7120.</title>
        <authorList>
            <person name="Kaneko T."/>
            <person name="Nakamura Y."/>
            <person name="Wolk C.P."/>
            <person name="Kuritz T."/>
            <person name="Sasamoto S."/>
            <person name="Watanabe A."/>
            <person name="Iriguchi M."/>
            <person name="Ishikawa A."/>
            <person name="Kawashima K."/>
            <person name="Kimura T."/>
            <person name="Kishida Y."/>
            <person name="Kohara M."/>
            <person name="Matsumoto M."/>
            <person name="Matsuno A."/>
            <person name="Muraki A."/>
            <person name="Nakazaki N."/>
            <person name="Shimpo S."/>
            <person name="Sugimoto M."/>
            <person name="Takazawa M."/>
            <person name="Yamada M."/>
            <person name="Yasuda M."/>
            <person name="Tabata S."/>
        </authorList>
    </citation>
    <scope>NUCLEOTIDE SEQUENCE [LARGE SCALE GENOMIC DNA]</scope>
    <source>
        <strain>PCC 7120 / SAG 25.82 / UTEX 2576</strain>
    </source>
</reference>
<gene>
    <name type="primary">pecE</name>
    <name type="ordered locus">alr0526</name>
</gene>
<evidence type="ECO:0000305" key="1"/>
<organism>
    <name type="scientific">Nostoc sp. (strain PCC 7120 / SAG 25.82 / UTEX 2576)</name>
    <dbReference type="NCBI Taxonomy" id="103690"/>
    <lineage>
        <taxon>Bacteria</taxon>
        <taxon>Bacillati</taxon>
        <taxon>Cyanobacteriota</taxon>
        <taxon>Cyanophyceae</taxon>
        <taxon>Nostocales</taxon>
        <taxon>Nostocaceae</taxon>
        <taxon>Nostoc</taxon>
    </lineage>
</organism>
<dbReference type="EMBL" id="AF178757">
    <property type="protein sequence ID" value="AAA22019.1"/>
    <property type="molecule type" value="Genomic_DNA"/>
</dbReference>
<dbReference type="EMBL" id="BA000019">
    <property type="protein sequence ID" value="BAB72484.1"/>
    <property type="molecule type" value="Genomic_DNA"/>
</dbReference>
<dbReference type="PIR" id="AE1872">
    <property type="entry name" value="AE1872"/>
</dbReference>
<dbReference type="PIR" id="D41841">
    <property type="entry name" value="D41841"/>
</dbReference>
<dbReference type="RefSeq" id="WP_010994702.1">
    <property type="nucleotide sequence ID" value="NZ_JACJQQ010000019.1"/>
</dbReference>
<dbReference type="SMR" id="P35791"/>
<dbReference type="STRING" id="103690.gene:10492537"/>
<dbReference type="KEGG" id="ana:alr0526"/>
<dbReference type="eggNOG" id="COG1413">
    <property type="taxonomic scope" value="Bacteria"/>
</dbReference>
<dbReference type="OrthoDB" id="454552at2"/>
<dbReference type="BioCyc" id="MetaCyc:MONOMER-18976"/>
<dbReference type="BRENDA" id="4.4.1.31">
    <property type="organism ID" value="4371"/>
</dbReference>
<dbReference type="Proteomes" id="UP000002483">
    <property type="component" value="Chromosome"/>
</dbReference>
<dbReference type="GO" id="GO:0030089">
    <property type="term" value="C:phycobilisome"/>
    <property type="evidence" value="ECO:0007669"/>
    <property type="project" value="UniProtKB-KW"/>
</dbReference>
<dbReference type="GO" id="GO:0016829">
    <property type="term" value="F:lyase activity"/>
    <property type="evidence" value="ECO:0007669"/>
    <property type="project" value="UniProtKB-KW"/>
</dbReference>
<dbReference type="GO" id="GO:0016491">
    <property type="term" value="F:oxidoreductase activity"/>
    <property type="evidence" value="ECO:0007669"/>
    <property type="project" value="TreeGrafter"/>
</dbReference>
<dbReference type="Gene3D" id="1.25.10.10">
    <property type="entry name" value="Leucine-rich Repeat Variant"/>
    <property type="match status" value="1"/>
</dbReference>
<dbReference type="InterPro" id="IPR011989">
    <property type="entry name" value="ARM-like"/>
</dbReference>
<dbReference type="InterPro" id="IPR016024">
    <property type="entry name" value="ARM-type_fold"/>
</dbReference>
<dbReference type="InterPro" id="IPR004155">
    <property type="entry name" value="PBS_lyase_HEAT"/>
</dbReference>
<dbReference type="PANTHER" id="PTHR12697:SF5">
    <property type="entry name" value="DEOXYHYPUSINE HYDROXYLASE"/>
    <property type="match status" value="1"/>
</dbReference>
<dbReference type="PANTHER" id="PTHR12697">
    <property type="entry name" value="PBS LYASE HEAT-LIKE PROTEIN"/>
    <property type="match status" value="1"/>
</dbReference>
<dbReference type="Pfam" id="PF13646">
    <property type="entry name" value="HEAT_2"/>
    <property type="match status" value="1"/>
</dbReference>
<dbReference type="Pfam" id="PF03130">
    <property type="entry name" value="HEAT_PBS"/>
    <property type="match status" value="2"/>
</dbReference>
<dbReference type="SMART" id="SM00567">
    <property type="entry name" value="EZ_HEAT"/>
    <property type="match status" value="5"/>
</dbReference>
<dbReference type="SUPFAM" id="SSF48371">
    <property type="entry name" value="ARM repeat"/>
    <property type="match status" value="1"/>
</dbReference>
<accession>P35791</accession>
<comment type="function">
    <text>An enzyme involved in the biosynthesis of bilin.</text>
</comment>
<comment type="similarity">
    <text evidence="1">Belongs to the CpcE/RpcE/PecE family.</text>
</comment>
<name>PECE_NOSS1</name>